<dbReference type="EC" id="1.1.1.37" evidence="1"/>
<dbReference type="EMBL" id="AP010918">
    <property type="protein sequence ID" value="BAH25563.1"/>
    <property type="molecule type" value="Genomic_DNA"/>
</dbReference>
<dbReference type="RefSeq" id="WP_003406301.1">
    <property type="nucleotide sequence ID" value="NZ_CP014566.1"/>
</dbReference>
<dbReference type="SMR" id="C1AMN4"/>
<dbReference type="KEGG" id="mbt:JTY_1275"/>
<dbReference type="HOGENOM" id="CLU_040727_2_0_11"/>
<dbReference type="GO" id="GO:0030060">
    <property type="term" value="F:L-malate dehydrogenase (NAD+) activity"/>
    <property type="evidence" value="ECO:0007669"/>
    <property type="project" value="UniProtKB-UniRule"/>
</dbReference>
<dbReference type="GO" id="GO:0006108">
    <property type="term" value="P:malate metabolic process"/>
    <property type="evidence" value="ECO:0007669"/>
    <property type="project" value="InterPro"/>
</dbReference>
<dbReference type="GO" id="GO:0006099">
    <property type="term" value="P:tricarboxylic acid cycle"/>
    <property type="evidence" value="ECO:0007669"/>
    <property type="project" value="UniProtKB-UniRule"/>
</dbReference>
<dbReference type="CDD" id="cd01338">
    <property type="entry name" value="MDH_chloroplast-like"/>
    <property type="match status" value="1"/>
</dbReference>
<dbReference type="FunFam" id="3.40.50.720:FF:000010">
    <property type="entry name" value="Malate dehydrogenase"/>
    <property type="match status" value="1"/>
</dbReference>
<dbReference type="FunFam" id="3.90.110.10:FF:000002">
    <property type="entry name" value="Malate dehydrogenase"/>
    <property type="match status" value="1"/>
</dbReference>
<dbReference type="Gene3D" id="3.90.110.10">
    <property type="entry name" value="Lactate dehydrogenase/glycoside hydrolase, family 4, C-terminal"/>
    <property type="match status" value="1"/>
</dbReference>
<dbReference type="Gene3D" id="3.40.50.720">
    <property type="entry name" value="NAD(P)-binding Rossmann-like Domain"/>
    <property type="match status" value="1"/>
</dbReference>
<dbReference type="HAMAP" id="MF_01517">
    <property type="entry name" value="Malate_dehydrog_2"/>
    <property type="match status" value="1"/>
</dbReference>
<dbReference type="InterPro" id="IPR001557">
    <property type="entry name" value="L-lactate/malate_DH"/>
</dbReference>
<dbReference type="InterPro" id="IPR022383">
    <property type="entry name" value="Lactate/malate_DH_C"/>
</dbReference>
<dbReference type="InterPro" id="IPR001236">
    <property type="entry name" value="Lactate/malate_DH_N"/>
</dbReference>
<dbReference type="InterPro" id="IPR015955">
    <property type="entry name" value="Lactate_DH/Glyco_Ohase_4_C"/>
</dbReference>
<dbReference type="InterPro" id="IPR001252">
    <property type="entry name" value="Malate_DH_AS"/>
</dbReference>
<dbReference type="InterPro" id="IPR010945">
    <property type="entry name" value="Malate_DH_type2"/>
</dbReference>
<dbReference type="InterPro" id="IPR036291">
    <property type="entry name" value="NAD(P)-bd_dom_sf"/>
</dbReference>
<dbReference type="NCBIfam" id="TIGR01759">
    <property type="entry name" value="MalateDH-SF1"/>
    <property type="match status" value="1"/>
</dbReference>
<dbReference type="NCBIfam" id="NF003916">
    <property type="entry name" value="PRK05442.1"/>
    <property type="match status" value="1"/>
</dbReference>
<dbReference type="PANTHER" id="PTHR23382">
    <property type="entry name" value="MALATE DEHYDROGENASE"/>
    <property type="match status" value="1"/>
</dbReference>
<dbReference type="Pfam" id="PF02866">
    <property type="entry name" value="Ldh_1_C"/>
    <property type="match status" value="1"/>
</dbReference>
<dbReference type="Pfam" id="PF00056">
    <property type="entry name" value="Ldh_1_N"/>
    <property type="match status" value="1"/>
</dbReference>
<dbReference type="PIRSF" id="PIRSF000102">
    <property type="entry name" value="Lac_mal_DH"/>
    <property type="match status" value="1"/>
</dbReference>
<dbReference type="SUPFAM" id="SSF56327">
    <property type="entry name" value="LDH C-terminal domain-like"/>
    <property type="match status" value="1"/>
</dbReference>
<dbReference type="SUPFAM" id="SSF51735">
    <property type="entry name" value="NAD(P)-binding Rossmann-fold domains"/>
    <property type="match status" value="1"/>
</dbReference>
<dbReference type="PROSITE" id="PS00068">
    <property type="entry name" value="MDH"/>
    <property type="match status" value="1"/>
</dbReference>
<comment type="function">
    <text evidence="1">Catalyzes the reversible oxidation of malate to oxaloacetate.</text>
</comment>
<comment type="catalytic activity">
    <reaction evidence="1">
        <text>(S)-malate + NAD(+) = oxaloacetate + NADH + H(+)</text>
        <dbReference type="Rhea" id="RHEA:21432"/>
        <dbReference type="ChEBI" id="CHEBI:15378"/>
        <dbReference type="ChEBI" id="CHEBI:15589"/>
        <dbReference type="ChEBI" id="CHEBI:16452"/>
        <dbReference type="ChEBI" id="CHEBI:57540"/>
        <dbReference type="ChEBI" id="CHEBI:57945"/>
        <dbReference type="EC" id="1.1.1.37"/>
    </reaction>
</comment>
<comment type="similarity">
    <text evidence="1">Belongs to the LDH/MDH superfamily. MDH type 2 family.</text>
</comment>
<name>MDH_MYCBT</name>
<organism>
    <name type="scientific">Mycobacterium bovis (strain BCG / Tokyo 172 / ATCC 35737 / TMC 1019)</name>
    <dbReference type="NCBI Taxonomy" id="561275"/>
    <lineage>
        <taxon>Bacteria</taxon>
        <taxon>Bacillati</taxon>
        <taxon>Actinomycetota</taxon>
        <taxon>Actinomycetes</taxon>
        <taxon>Mycobacteriales</taxon>
        <taxon>Mycobacteriaceae</taxon>
        <taxon>Mycobacterium</taxon>
        <taxon>Mycobacterium tuberculosis complex</taxon>
    </lineage>
</organism>
<feature type="chain" id="PRO_1000185084" description="Malate dehydrogenase">
    <location>
        <begin position="1"/>
        <end position="329"/>
    </location>
</feature>
<feature type="active site" description="Proton acceptor" evidence="1">
    <location>
        <position position="188"/>
    </location>
</feature>
<feature type="binding site" evidence="1">
    <location>
        <begin position="12"/>
        <end position="18"/>
    </location>
    <ligand>
        <name>NAD(+)</name>
        <dbReference type="ChEBI" id="CHEBI:57540"/>
    </ligand>
</feature>
<feature type="binding site" evidence="1">
    <location>
        <position position="93"/>
    </location>
    <ligand>
        <name>substrate</name>
    </ligand>
</feature>
<feature type="binding site" evidence="1">
    <location>
        <position position="99"/>
    </location>
    <ligand>
        <name>substrate</name>
    </ligand>
</feature>
<feature type="binding site" evidence="1">
    <location>
        <position position="106"/>
    </location>
    <ligand>
        <name>NAD(+)</name>
        <dbReference type="ChEBI" id="CHEBI:57540"/>
    </ligand>
</feature>
<feature type="binding site" evidence="1">
    <location>
        <position position="113"/>
    </location>
    <ligand>
        <name>NAD(+)</name>
        <dbReference type="ChEBI" id="CHEBI:57540"/>
    </ligand>
</feature>
<feature type="binding site" evidence="1">
    <location>
        <begin position="130"/>
        <end position="132"/>
    </location>
    <ligand>
        <name>NAD(+)</name>
        <dbReference type="ChEBI" id="CHEBI:57540"/>
    </ligand>
</feature>
<feature type="binding site" evidence="1">
    <location>
        <position position="132"/>
    </location>
    <ligand>
        <name>substrate</name>
    </ligand>
</feature>
<feature type="binding site" evidence="1">
    <location>
        <position position="163"/>
    </location>
    <ligand>
        <name>substrate</name>
    </ligand>
</feature>
<accession>C1AMN4</accession>
<gene>
    <name evidence="1" type="primary">mdh</name>
    <name type="ordered locus">JTY_1275</name>
</gene>
<evidence type="ECO:0000255" key="1">
    <source>
        <dbReference type="HAMAP-Rule" id="MF_01517"/>
    </source>
</evidence>
<protein>
    <recommendedName>
        <fullName evidence="1">Malate dehydrogenase</fullName>
        <ecNumber evidence="1">1.1.1.37</ecNumber>
    </recommendedName>
</protein>
<reference key="1">
    <citation type="journal article" date="2009" name="Vaccine">
        <title>Whole genome sequence analysis of Mycobacterium bovis bacillus Calmette-Guerin (BCG) Tokyo 172: a comparative study of BCG vaccine substrains.</title>
        <authorList>
            <person name="Seki M."/>
            <person name="Honda I."/>
            <person name="Fujita I."/>
            <person name="Yano I."/>
            <person name="Yamamoto S."/>
            <person name="Koyama A."/>
        </authorList>
    </citation>
    <scope>NUCLEOTIDE SEQUENCE [LARGE SCALE GENOMIC DNA]</scope>
    <source>
        <strain>BCG / Tokyo 172 / ATCC 35737 / TMC 1019</strain>
    </source>
</reference>
<sequence length="329" mass="34322">MSASPLKVAVTGAAGQIGYSLLFRLASGSLLGPDRPIELRLLEIEPALQALEGVVMELDDCAFPLLSGVEIGSDPQKIFDGVSLALLVGARPRGAGMERSDLLEANGAIFTAQGKALNAVAADDVRVGVTGNPANTNALIAMTNAPDIPRERFSALTRLDHNRAISQLAAKTGAAVTDIKKMTIWGNHSATQYPDLFHAEVAGKNAAEVVNDQAWIEDEFIPTVAKRGAAIIDARGASSAASAASATIDAARDWLLGTPADDWVSMAVVSDGSYGVPEGLISSFPVTTKGGNWTIVSGLEIDEFSRGRIDKSTAELADERSAVTELGLI</sequence>
<keyword id="KW-0520">NAD</keyword>
<keyword id="KW-0560">Oxidoreductase</keyword>
<keyword id="KW-0816">Tricarboxylic acid cycle</keyword>
<proteinExistence type="inferred from homology"/>